<feature type="chain" id="PRO_0000309949" description="Large ribosomal subunit protein uL2">
    <location>
        <begin position="1"/>
        <end position="277"/>
    </location>
</feature>
<feature type="region of interest" description="Disordered" evidence="2">
    <location>
        <begin position="24"/>
        <end position="55"/>
    </location>
</feature>
<feature type="region of interest" description="Disordered" evidence="2">
    <location>
        <begin position="221"/>
        <end position="277"/>
    </location>
</feature>
<accession>A0ALW5</accession>
<organism>
    <name type="scientific">Listeria welshimeri serovar 6b (strain ATCC 35897 / DSM 20650 / CCUG 15529 / CIP 8149 / NCTC 11857 / SLCC 5334 / V8)</name>
    <dbReference type="NCBI Taxonomy" id="386043"/>
    <lineage>
        <taxon>Bacteria</taxon>
        <taxon>Bacillati</taxon>
        <taxon>Bacillota</taxon>
        <taxon>Bacilli</taxon>
        <taxon>Bacillales</taxon>
        <taxon>Listeriaceae</taxon>
        <taxon>Listeria</taxon>
    </lineage>
</organism>
<keyword id="KW-0687">Ribonucleoprotein</keyword>
<keyword id="KW-0689">Ribosomal protein</keyword>
<keyword id="KW-0694">RNA-binding</keyword>
<keyword id="KW-0699">rRNA-binding</keyword>
<comment type="function">
    <text evidence="1">One of the primary rRNA binding proteins. Required for association of the 30S and 50S subunits to form the 70S ribosome, for tRNA binding and peptide bond formation. It has been suggested to have peptidyltransferase activity; this is somewhat controversial. Makes several contacts with the 16S rRNA in the 70S ribosome.</text>
</comment>
<comment type="subunit">
    <text evidence="1">Part of the 50S ribosomal subunit. Forms a bridge to the 30S subunit in the 70S ribosome.</text>
</comment>
<comment type="similarity">
    <text evidence="1">Belongs to the universal ribosomal protein uL2 family.</text>
</comment>
<dbReference type="EMBL" id="AM263198">
    <property type="protein sequence ID" value="CAK21997.1"/>
    <property type="molecule type" value="Genomic_DNA"/>
</dbReference>
<dbReference type="RefSeq" id="WP_011703285.1">
    <property type="nucleotide sequence ID" value="NC_008555.1"/>
</dbReference>
<dbReference type="SMR" id="A0ALW5"/>
<dbReference type="STRING" id="386043.lwe2579"/>
<dbReference type="GeneID" id="61190503"/>
<dbReference type="KEGG" id="lwe:lwe2579"/>
<dbReference type="eggNOG" id="COG0090">
    <property type="taxonomic scope" value="Bacteria"/>
</dbReference>
<dbReference type="HOGENOM" id="CLU_036235_2_1_9"/>
<dbReference type="OrthoDB" id="9778722at2"/>
<dbReference type="Proteomes" id="UP000000779">
    <property type="component" value="Chromosome"/>
</dbReference>
<dbReference type="GO" id="GO:0015934">
    <property type="term" value="C:large ribosomal subunit"/>
    <property type="evidence" value="ECO:0007669"/>
    <property type="project" value="InterPro"/>
</dbReference>
<dbReference type="GO" id="GO:0019843">
    <property type="term" value="F:rRNA binding"/>
    <property type="evidence" value="ECO:0007669"/>
    <property type="project" value="UniProtKB-UniRule"/>
</dbReference>
<dbReference type="GO" id="GO:0003735">
    <property type="term" value="F:structural constituent of ribosome"/>
    <property type="evidence" value="ECO:0007669"/>
    <property type="project" value="InterPro"/>
</dbReference>
<dbReference type="GO" id="GO:0016740">
    <property type="term" value="F:transferase activity"/>
    <property type="evidence" value="ECO:0007669"/>
    <property type="project" value="InterPro"/>
</dbReference>
<dbReference type="GO" id="GO:0002181">
    <property type="term" value="P:cytoplasmic translation"/>
    <property type="evidence" value="ECO:0007669"/>
    <property type="project" value="TreeGrafter"/>
</dbReference>
<dbReference type="FunFam" id="2.30.30.30:FF:000001">
    <property type="entry name" value="50S ribosomal protein L2"/>
    <property type="match status" value="1"/>
</dbReference>
<dbReference type="FunFam" id="2.40.50.140:FF:000003">
    <property type="entry name" value="50S ribosomal protein L2"/>
    <property type="match status" value="1"/>
</dbReference>
<dbReference type="FunFam" id="4.10.950.10:FF:000001">
    <property type="entry name" value="50S ribosomal protein L2"/>
    <property type="match status" value="1"/>
</dbReference>
<dbReference type="Gene3D" id="2.30.30.30">
    <property type="match status" value="1"/>
</dbReference>
<dbReference type="Gene3D" id="2.40.50.140">
    <property type="entry name" value="Nucleic acid-binding proteins"/>
    <property type="match status" value="1"/>
</dbReference>
<dbReference type="Gene3D" id="4.10.950.10">
    <property type="entry name" value="Ribosomal protein L2, domain 3"/>
    <property type="match status" value="1"/>
</dbReference>
<dbReference type="HAMAP" id="MF_01320_B">
    <property type="entry name" value="Ribosomal_uL2_B"/>
    <property type="match status" value="1"/>
</dbReference>
<dbReference type="InterPro" id="IPR012340">
    <property type="entry name" value="NA-bd_OB-fold"/>
</dbReference>
<dbReference type="InterPro" id="IPR014722">
    <property type="entry name" value="Rib_uL2_dom2"/>
</dbReference>
<dbReference type="InterPro" id="IPR002171">
    <property type="entry name" value="Ribosomal_uL2"/>
</dbReference>
<dbReference type="InterPro" id="IPR005880">
    <property type="entry name" value="Ribosomal_uL2_bac/org-type"/>
</dbReference>
<dbReference type="InterPro" id="IPR022669">
    <property type="entry name" value="Ribosomal_uL2_C"/>
</dbReference>
<dbReference type="InterPro" id="IPR022671">
    <property type="entry name" value="Ribosomal_uL2_CS"/>
</dbReference>
<dbReference type="InterPro" id="IPR014726">
    <property type="entry name" value="Ribosomal_uL2_dom3"/>
</dbReference>
<dbReference type="InterPro" id="IPR022666">
    <property type="entry name" value="Ribosomal_uL2_RNA-bd_dom"/>
</dbReference>
<dbReference type="InterPro" id="IPR008991">
    <property type="entry name" value="Translation_prot_SH3-like_sf"/>
</dbReference>
<dbReference type="NCBIfam" id="TIGR01171">
    <property type="entry name" value="rplB_bact"/>
    <property type="match status" value="1"/>
</dbReference>
<dbReference type="PANTHER" id="PTHR13691:SF5">
    <property type="entry name" value="LARGE RIBOSOMAL SUBUNIT PROTEIN UL2M"/>
    <property type="match status" value="1"/>
</dbReference>
<dbReference type="PANTHER" id="PTHR13691">
    <property type="entry name" value="RIBOSOMAL PROTEIN L2"/>
    <property type="match status" value="1"/>
</dbReference>
<dbReference type="Pfam" id="PF00181">
    <property type="entry name" value="Ribosomal_L2"/>
    <property type="match status" value="1"/>
</dbReference>
<dbReference type="Pfam" id="PF03947">
    <property type="entry name" value="Ribosomal_L2_C"/>
    <property type="match status" value="1"/>
</dbReference>
<dbReference type="PIRSF" id="PIRSF002158">
    <property type="entry name" value="Ribosomal_L2"/>
    <property type="match status" value="1"/>
</dbReference>
<dbReference type="SMART" id="SM01383">
    <property type="entry name" value="Ribosomal_L2"/>
    <property type="match status" value="1"/>
</dbReference>
<dbReference type="SMART" id="SM01382">
    <property type="entry name" value="Ribosomal_L2_C"/>
    <property type="match status" value="1"/>
</dbReference>
<dbReference type="SUPFAM" id="SSF50249">
    <property type="entry name" value="Nucleic acid-binding proteins"/>
    <property type="match status" value="1"/>
</dbReference>
<dbReference type="SUPFAM" id="SSF50104">
    <property type="entry name" value="Translation proteins SH3-like domain"/>
    <property type="match status" value="1"/>
</dbReference>
<dbReference type="PROSITE" id="PS00467">
    <property type="entry name" value="RIBOSOMAL_L2"/>
    <property type="match status" value="1"/>
</dbReference>
<reference key="1">
    <citation type="journal article" date="2006" name="J. Bacteriol.">
        <title>Whole-genome sequence of Listeria welshimeri reveals common steps in genome reduction with Listeria innocua as compared to Listeria monocytogenes.</title>
        <authorList>
            <person name="Hain T."/>
            <person name="Steinweg C."/>
            <person name="Kuenne C.T."/>
            <person name="Billion A."/>
            <person name="Ghai R."/>
            <person name="Chatterjee S.S."/>
            <person name="Domann E."/>
            <person name="Kaerst U."/>
            <person name="Goesmann A."/>
            <person name="Bekel T."/>
            <person name="Bartels D."/>
            <person name="Kaiser O."/>
            <person name="Meyer F."/>
            <person name="Puehler A."/>
            <person name="Weisshaar B."/>
            <person name="Wehland J."/>
            <person name="Liang C."/>
            <person name="Dandekar T."/>
            <person name="Lampidis R."/>
            <person name="Kreft J."/>
            <person name="Goebel W."/>
            <person name="Chakraborty T."/>
        </authorList>
    </citation>
    <scope>NUCLEOTIDE SEQUENCE [LARGE SCALE GENOMIC DNA]</scope>
    <source>
        <strain>ATCC 35897 / DSM 20650 / CCUG 15529 / CIP 8149 / NCTC 11857 / SLCC 5334 / V8</strain>
    </source>
</reference>
<proteinExistence type="inferred from homology"/>
<sequence>MAIKKYKPTTNGRRHMTSSDFAEITTSTPEKSLLRPLKKKAGRNNQGKLTVRHHGGGHKRQYRVIDFKRNKDGIPGRVATIEYDPNRSANIALINYADGEKRYIIAAKGLEVGQTIYSGAEADIKIGNALELKDIPVGTVVHNIEMKPGKGGQLVRSAGTSAQVLGKEGKYVLIRLNSGEVRMILATCRATIGQVGNEQHELINIGKAGRSRWMGKRPTVRGSVMNPNDHPHGGGEGKAPIGRKSPMSPWGKPTLGYKTRKKNNNSDKFIVRRRKKK</sequence>
<gene>
    <name evidence="1" type="primary">rplB</name>
    <name type="ordered locus">lwe2579</name>
</gene>
<name>RL2_LISW6</name>
<evidence type="ECO:0000255" key="1">
    <source>
        <dbReference type="HAMAP-Rule" id="MF_01320"/>
    </source>
</evidence>
<evidence type="ECO:0000256" key="2">
    <source>
        <dbReference type="SAM" id="MobiDB-lite"/>
    </source>
</evidence>
<evidence type="ECO:0000305" key="3"/>
<protein>
    <recommendedName>
        <fullName evidence="1">Large ribosomal subunit protein uL2</fullName>
    </recommendedName>
    <alternativeName>
        <fullName evidence="3">50S ribosomal protein L2</fullName>
    </alternativeName>
</protein>